<protein>
    <recommendedName>
        <fullName>Beta sliding clamp</fullName>
        <shortName>Beta clamp</shortName>
        <shortName>Sliding clamp</shortName>
    </recommendedName>
    <alternativeName>
        <fullName>Beta-clamp processivity factor</fullName>
    </alternativeName>
    <alternativeName>
        <fullName>DNA polymerase III beta sliding clamp subunit</fullName>
    </alternativeName>
    <alternativeName>
        <fullName>DNA polymerase III subunit beta</fullName>
    </alternativeName>
</protein>
<dbReference type="EMBL" id="M34006">
    <property type="protein sequence ID" value="AAA25316.1"/>
    <property type="molecule type" value="Genomic_DNA"/>
</dbReference>
<dbReference type="PIR" id="JQ0740">
    <property type="entry name" value="JQ0740"/>
</dbReference>
<dbReference type="SMR" id="P21174"/>
<dbReference type="STRING" id="1232675.GCA_000309825_00064"/>
<dbReference type="GO" id="GO:0005737">
    <property type="term" value="C:cytoplasm"/>
    <property type="evidence" value="ECO:0007669"/>
    <property type="project" value="UniProtKB-SubCell"/>
</dbReference>
<dbReference type="GO" id="GO:0009360">
    <property type="term" value="C:DNA polymerase III complex"/>
    <property type="evidence" value="ECO:0007669"/>
    <property type="project" value="InterPro"/>
</dbReference>
<dbReference type="GO" id="GO:0008408">
    <property type="term" value="F:3'-5' exonuclease activity"/>
    <property type="evidence" value="ECO:0007669"/>
    <property type="project" value="InterPro"/>
</dbReference>
<dbReference type="GO" id="GO:0003677">
    <property type="term" value="F:DNA binding"/>
    <property type="evidence" value="ECO:0007669"/>
    <property type="project" value="UniProtKB-KW"/>
</dbReference>
<dbReference type="GO" id="GO:0003887">
    <property type="term" value="F:DNA-directed DNA polymerase activity"/>
    <property type="evidence" value="ECO:0007669"/>
    <property type="project" value="UniProtKB-KW"/>
</dbReference>
<dbReference type="GO" id="GO:0006271">
    <property type="term" value="P:DNA strand elongation involved in DNA replication"/>
    <property type="evidence" value="ECO:0007669"/>
    <property type="project" value="TreeGrafter"/>
</dbReference>
<dbReference type="CDD" id="cd00140">
    <property type="entry name" value="beta_clamp"/>
    <property type="match status" value="1"/>
</dbReference>
<dbReference type="FunFam" id="3.10.150.10:FF:000001">
    <property type="entry name" value="Beta sliding clamp"/>
    <property type="match status" value="1"/>
</dbReference>
<dbReference type="Gene3D" id="3.10.150.10">
    <property type="entry name" value="DNA Polymerase III, subunit A, domain 2"/>
    <property type="match status" value="3"/>
</dbReference>
<dbReference type="InterPro" id="IPR046938">
    <property type="entry name" value="DNA_clamp_sf"/>
</dbReference>
<dbReference type="InterPro" id="IPR001001">
    <property type="entry name" value="DNA_polIII_beta"/>
</dbReference>
<dbReference type="InterPro" id="IPR022635">
    <property type="entry name" value="DNA_polIII_beta_C"/>
</dbReference>
<dbReference type="InterPro" id="IPR022637">
    <property type="entry name" value="DNA_polIII_beta_cen"/>
</dbReference>
<dbReference type="InterPro" id="IPR022634">
    <property type="entry name" value="DNA_polIII_beta_N"/>
</dbReference>
<dbReference type="NCBIfam" id="TIGR00663">
    <property type="entry name" value="dnan"/>
    <property type="match status" value="1"/>
</dbReference>
<dbReference type="PANTHER" id="PTHR30478:SF0">
    <property type="entry name" value="BETA SLIDING CLAMP"/>
    <property type="match status" value="1"/>
</dbReference>
<dbReference type="PANTHER" id="PTHR30478">
    <property type="entry name" value="DNA POLYMERASE III SUBUNIT BETA"/>
    <property type="match status" value="1"/>
</dbReference>
<dbReference type="Pfam" id="PF00712">
    <property type="entry name" value="DNA_pol3_beta"/>
    <property type="match status" value="1"/>
</dbReference>
<dbReference type="Pfam" id="PF02767">
    <property type="entry name" value="DNA_pol3_beta_2"/>
    <property type="match status" value="1"/>
</dbReference>
<dbReference type="Pfam" id="PF02768">
    <property type="entry name" value="DNA_pol3_beta_3"/>
    <property type="match status" value="1"/>
</dbReference>
<dbReference type="SMART" id="SM00480">
    <property type="entry name" value="POL3Bc"/>
    <property type="match status" value="1"/>
</dbReference>
<dbReference type="SUPFAM" id="SSF55979">
    <property type="entry name" value="DNA clamp"/>
    <property type="match status" value="3"/>
</dbReference>
<sequence>MKFTVERDILTDAVSWAARSLSPRPPVPVLSGLLITAEAGVVSIASFDYETSARLEIEADVETAGQVLVSGRLLNDIVRSLPQAQVTVELDGGKVLVTCRSSRFSLATMPVGDYPALPELPAPAGTVDGAAFAHAVAQVTVAASKDDTLPILTAVKVEIEGDTITFLATDRYRLAMKEIRWTPADPSISTSLLIKARTLTEVAKSLGSGGDLEILLGQTADLVGFASGGRRTTSVLVDGEYPKIRSLFPESSPIQAVVDTAALVEASRRVALVAERNTALRMVFTEGQVTLDAGTGDDASANESVPCTLE</sequence>
<accession>P21174</accession>
<name>DPO3B_MICLU</name>
<keyword id="KW-0963">Cytoplasm</keyword>
<keyword id="KW-0235">DNA replication</keyword>
<keyword id="KW-0238">DNA-binding</keyword>
<keyword id="KW-0239">DNA-directed DNA polymerase</keyword>
<keyword id="KW-0548">Nucleotidyltransferase</keyword>
<keyword id="KW-0808">Transferase</keyword>
<organism>
    <name type="scientific">Micrococcus luteus</name>
    <name type="common">Micrococcus lysodeikticus</name>
    <dbReference type="NCBI Taxonomy" id="1270"/>
    <lineage>
        <taxon>Bacteria</taxon>
        <taxon>Bacillati</taxon>
        <taxon>Actinomycetota</taxon>
        <taxon>Actinomycetes</taxon>
        <taxon>Micrococcales</taxon>
        <taxon>Micrococcaceae</taxon>
        <taxon>Micrococcus</taxon>
    </lineage>
</organism>
<evidence type="ECO:0000250" key="1">
    <source>
        <dbReference type="UniProtKB" id="P0A988"/>
    </source>
</evidence>
<evidence type="ECO:0000305" key="2"/>
<comment type="function">
    <text evidence="1">Confers DNA tethering and processivity to DNA polymerases and other proteins. Acts as a clamp, forming a ring around DNA (a reaction catalyzed by the clamp-loading complex) which diffuses in an ATP-independent manner freely and bidirectionally along dsDNA. Initially characterized for its ability to contact the catalytic subunit of DNA polymerase III (Pol III), a complex, multichain enzyme responsible for most of the replicative synthesis in bacteria; Pol III exhibits 3'-5' exonuclease proofreading activity. The beta chain is required for initiation of replication as well as for processivity of DNA replication.</text>
</comment>
<comment type="subunit">
    <text evidence="1">Forms a ring-shaped head-to-tail homodimer around DNA which binds and tethers DNA polymerases and other proteins to the DNA. The DNA replisome complex has a single clamp-loading complex (3 tau and 1 each of delta, delta', psi and chi subunits) which binds 3 Pol III cores (1 core on the leading strand and 2 on the lagging strand) each with a beta sliding clamp dimer. Additional proteins in the replisome are other copies of gamma, psi and chi, Ssb, DNA helicase and RNA primase.</text>
</comment>
<comment type="subcellular location">
    <subcellularLocation>
        <location evidence="1">Cytoplasm</location>
    </subcellularLocation>
</comment>
<comment type="similarity">
    <text evidence="2">Belongs to the beta sliding clamp family.</text>
</comment>
<feature type="chain" id="PRO_0000105442" description="Beta sliding clamp">
    <location>
        <begin position="1"/>
        <end position="310" status="greater than"/>
    </location>
</feature>
<feature type="non-terminal residue">
    <location>
        <position position="310"/>
    </location>
</feature>
<proteinExistence type="inferred from homology"/>
<reference key="1">
    <citation type="journal article" date="1990" name="Gene">
        <title>Structure of the dnaA region of Micrococcus luteus: conservation and variations among eubacteria.</title>
        <authorList>
            <person name="Fujita M.Q."/>
            <person name="Yoshikawa H."/>
            <person name="Ogasawara N."/>
        </authorList>
    </citation>
    <scope>NUCLEOTIDE SEQUENCE [GENOMIC DNA]</scope>
</reference>
<gene>
    <name type="primary">dnaN</name>
</gene>